<evidence type="ECO:0000250" key="1"/>
<evidence type="ECO:0000255" key="2"/>
<evidence type="ECO:0000255" key="3">
    <source>
        <dbReference type="PROSITE-ProRule" id="PRU00280"/>
    </source>
</evidence>
<evidence type="ECO:0000305" key="4"/>
<evidence type="ECO:0007829" key="5">
    <source>
        <dbReference type="PDB" id="2GCF"/>
    </source>
</evidence>
<evidence type="ECO:0007829" key="6">
    <source>
        <dbReference type="PDB" id="4A4J"/>
    </source>
</evidence>
<keyword id="KW-0002">3D-structure</keyword>
<keyword id="KW-0067">ATP-binding</keyword>
<keyword id="KW-1003">Cell membrane</keyword>
<keyword id="KW-0186">Copper</keyword>
<keyword id="KW-0187">Copper transport</keyword>
<keyword id="KW-0406">Ion transport</keyword>
<keyword id="KW-0460">Magnesium</keyword>
<keyword id="KW-0472">Membrane</keyword>
<keyword id="KW-0479">Metal-binding</keyword>
<keyword id="KW-0547">Nucleotide-binding</keyword>
<keyword id="KW-0597">Phosphoprotein</keyword>
<keyword id="KW-1185">Reference proteome</keyword>
<keyword id="KW-1278">Translocase</keyword>
<keyword id="KW-0812">Transmembrane</keyword>
<keyword id="KW-1133">Transmembrane helix</keyword>
<keyword id="KW-0813">Transport</keyword>
<gene>
    <name type="primary">pacS</name>
    <name type="ordered locus">sll1920</name>
</gene>
<accession>P73241</accession>
<comment type="function">
    <text evidence="1">May play a role in the osmotic adaptation.</text>
</comment>
<comment type="catalytic activity">
    <reaction>
        <text>Cu(+)(in) + ATP + H2O = Cu(+)(out) + ADP + phosphate + H(+)</text>
        <dbReference type="Rhea" id="RHEA:25792"/>
        <dbReference type="ChEBI" id="CHEBI:15377"/>
        <dbReference type="ChEBI" id="CHEBI:15378"/>
        <dbReference type="ChEBI" id="CHEBI:30616"/>
        <dbReference type="ChEBI" id="CHEBI:43474"/>
        <dbReference type="ChEBI" id="CHEBI:49552"/>
        <dbReference type="ChEBI" id="CHEBI:456216"/>
        <dbReference type="EC" id="7.2.2.8"/>
    </reaction>
</comment>
<comment type="interaction">
    <interactant intactId="EBI-904982">
        <id>P73241</id>
    </interactant>
    <interactant intactId="EBI-904975">
        <id>P73213</id>
        <label>ssr2857</label>
    </interactant>
    <organismsDiffer>false</organismsDiffer>
    <experiments>3</experiments>
</comment>
<comment type="subcellular location">
    <subcellularLocation>
        <location>Cell membrane</location>
        <topology>Multi-pass membrane protein</topology>
    </subcellularLocation>
</comment>
<comment type="similarity">
    <text evidence="4">Belongs to the cation transport ATPase (P-type) (TC 3.A.3) family. Type IB subfamily.</text>
</comment>
<feature type="chain" id="PRO_0000046161" description="Probable copper-transporting ATPase PacS">
    <location>
        <begin position="1"/>
        <end position="745"/>
    </location>
</feature>
<feature type="topological domain" description="Cytoplasmic" evidence="2">
    <location>
        <begin position="1"/>
        <end position="94"/>
    </location>
</feature>
<feature type="transmembrane region" description="Helical" evidence="2">
    <location>
        <begin position="95"/>
        <end position="115"/>
    </location>
</feature>
<feature type="topological domain" description="Extracellular" evidence="2">
    <location>
        <begin position="116"/>
        <end position="125"/>
    </location>
</feature>
<feature type="transmembrane region" description="Helical" evidence="2">
    <location>
        <begin position="126"/>
        <end position="145"/>
    </location>
</feature>
<feature type="topological domain" description="Cytoplasmic" evidence="2">
    <location>
        <begin position="146"/>
        <end position="152"/>
    </location>
</feature>
<feature type="transmembrane region" description="Helical" evidence="2">
    <location>
        <begin position="153"/>
        <end position="173"/>
    </location>
</feature>
<feature type="topological domain" description="Extracellular" evidence="2">
    <location>
        <begin position="174"/>
        <end position="193"/>
    </location>
</feature>
<feature type="transmembrane region" description="Helical" evidence="2">
    <location>
        <begin position="194"/>
        <end position="214"/>
    </location>
</feature>
<feature type="topological domain" description="Cytoplasmic" evidence="2">
    <location>
        <begin position="215"/>
        <end position="342"/>
    </location>
</feature>
<feature type="transmembrane region" description="Helical" evidence="2">
    <location>
        <begin position="343"/>
        <end position="365"/>
    </location>
</feature>
<feature type="topological domain" description="Extracellular" evidence="2">
    <location>
        <begin position="366"/>
        <end position="372"/>
    </location>
</feature>
<feature type="transmembrane region" description="Helical" evidence="2">
    <location>
        <begin position="373"/>
        <end position="390"/>
    </location>
</feature>
<feature type="topological domain" description="Cytoplasmic" evidence="2">
    <location>
        <begin position="391"/>
        <end position="543"/>
    </location>
</feature>
<feature type="transmembrane region" description="Helical" evidence="2">
    <location>
        <begin position="544"/>
        <end position="564"/>
    </location>
</feature>
<feature type="topological domain" description="Extracellular" evidence="2">
    <location>
        <begin position="565"/>
        <end position="687"/>
    </location>
</feature>
<feature type="transmembrane region" description="Helical" evidence="2">
    <location>
        <begin position="688"/>
        <end position="707"/>
    </location>
</feature>
<feature type="topological domain" description="Cytoplasmic" evidence="2">
    <location>
        <begin position="708"/>
        <end position="719"/>
    </location>
</feature>
<feature type="transmembrane region" description="Helical" evidence="2">
    <location>
        <begin position="720"/>
        <end position="738"/>
    </location>
</feature>
<feature type="topological domain" description="Extracellular" evidence="2">
    <location>
        <begin position="739"/>
        <end position="745"/>
    </location>
</feature>
<feature type="domain" description="HMA" evidence="3">
    <location>
        <begin position="3"/>
        <end position="68"/>
    </location>
</feature>
<feature type="active site" description="4-aspartylphosphate intermediate" evidence="4">
    <location>
        <position position="428"/>
    </location>
</feature>
<feature type="binding site" evidence="3">
    <location>
        <position position="14"/>
    </location>
    <ligand>
        <name>a metal cation</name>
        <dbReference type="ChEBI" id="CHEBI:25213"/>
    </ligand>
</feature>
<feature type="binding site" evidence="3">
    <location>
        <position position="17"/>
    </location>
    <ligand>
        <name>a metal cation</name>
        <dbReference type="ChEBI" id="CHEBI:25213"/>
    </ligand>
</feature>
<feature type="binding site">
    <location>
        <position position="633"/>
    </location>
    <ligand>
        <name>Mg(2+)</name>
        <dbReference type="ChEBI" id="CHEBI:18420"/>
    </ligand>
</feature>
<feature type="binding site">
    <location>
        <position position="637"/>
    </location>
    <ligand>
        <name>Mg(2+)</name>
        <dbReference type="ChEBI" id="CHEBI:18420"/>
    </ligand>
</feature>
<feature type="strand" evidence="6">
    <location>
        <begin position="3"/>
        <end position="11"/>
    </location>
</feature>
<feature type="helix" evidence="6">
    <location>
        <begin position="15"/>
        <end position="26"/>
    </location>
</feature>
<feature type="strand" evidence="6">
    <location>
        <begin position="31"/>
        <end position="37"/>
    </location>
</feature>
<feature type="turn" evidence="6">
    <location>
        <begin position="38"/>
        <end position="41"/>
    </location>
</feature>
<feature type="strand" evidence="6">
    <location>
        <begin position="42"/>
        <end position="47"/>
    </location>
</feature>
<feature type="strand" evidence="5">
    <location>
        <begin position="49"/>
        <end position="51"/>
    </location>
</feature>
<feature type="helix" evidence="6">
    <location>
        <begin position="53"/>
        <end position="62"/>
    </location>
</feature>
<feature type="strand" evidence="6">
    <location>
        <begin position="66"/>
        <end position="69"/>
    </location>
</feature>
<name>ATCS_SYNY3</name>
<protein>
    <recommendedName>
        <fullName>Probable copper-transporting ATPase PacS</fullName>
        <ecNumber>7.2.2.8</ecNumber>
    </recommendedName>
</protein>
<reference key="1">
    <citation type="journal article" date="1996" name="DNA Res.">
        <title>Sequence analysis of the genome of the unicellular cyanobacterium Synechocystis sp. strain PCC6803. II. Sequence determination of the entire genome and assignment of potential protein-coding regions.</title>
        <authorList>
            <person name="Kaneko T."/>
            <person name="Sato S."/>
            <person name="Kotani H."/>
            <person name="Tanaka A."/>
            <person name="Asamizu E."/>
            <person name="Nakamura Y."/>
            <person name="Miyajima N."/>
            <person name="Hirosawa M."/>
            <person name="Sugiura M."/>
            <person name="Sasamoto S."/>
            <person name="Kimura T."/>
            <person name="Hosouchi T."/>
            <person name="Matsuno A."/>
            <person name="Muraki A."/>
            <person name="Nakazaki N."/>
            <person name="Naruo K."/>
            <person name="Okumura S."/>
            <person name="Shimpo S."/>
            <person name="Takeuchi C."/>
            <person name="Wada T."/>
            <person name="Watanabe A."/>
            <person name="Yamada M."/>
            <person name="Yasuda M."/>
            <person name="Tabata S."/>
        </authorList>
    </citation>
    <scope>NUCLEOTIDE SEQUENCE [LARGE SCALE GENOMIC DNA]</scope>
    <source>
        <strain>ATCC 27184 / PCC 6803 / Kazusa</strain>
    </source>
</reference>
<dbReference type="EC" id="7.2.2.8"/>
<dbReference type="EMBL" id="BA000022">
    <property type="protein sequence ID" value="BAA17268.1"/>
    <property type="molecule type" value="Genomic_DNA"/>
</dbReference>
<dbReference type="PIR" id="S75354">
    <property type="entry name" value="S75354"/>
</dbReference>
<dbReference type="PDB" id="2GCF">
    <property type="method" value="NMR"/>
    <property type="chains" value="A=1-73"/>
</dbReference>
<dbReference type="PDB" id="2XMW">
    <property type="method" value="X-ray"/>
    <property type="resolution" value="1.80 A"/>
    <property type="chains" value="A=1-71"/>
</dbReference>
<dbReference type="PDB" id="4A48">
    <property type="method" value="X-ray"/>
    <property type="resolution" value="1.40 A"/>
    <property type="chains" value="A/B=2-70"/>
</dbReference>
<dbReference type="PDB" id="4A4J">
    <property type="method" value="X-ray"/>
    <property type="resolution" value="1.25 A"/>
    <property type="chains" value="A=2-70"/>
</dbReference>
<dbReference type="PDBsum" id="2GCF"/>
<dbReference type="PDBsum" id="2XMW"/>
<dbReference type="PDBsum" id="4A48"/>
<dbReference type="PDBsum" id="4A4J"/>
<dbReference type="SMR" id="P73241"/>
<dbReference type="DIP" id="DIP-35107N"/>
<dbReference type="FunCoup" id="P73241">
    <property type="interactions" value="402"/>
</dbReference>
<dbReference type="IntAct" id="P73241">
    <property type="interactions" value="11"/>
</dbReference>
<dbReference type="STRING" id="1148.gene:10498131"/>
<dbReference type="PaxDb" id="1148-1652345"/>
<dbReference type="EnsemblBacteria" id="BAA17268">
    <property type="protein sequence ID" value="BAA17268"/>
    <property type="gene ID" value="BAA17268"/>
</dbReference>
<dbReference type="KEGG" id="syn:sll1920"/>
<dbReference type="eggNOG" id="COG2217">
    <property type="taxonomic scope" value="Bacteria"/>
</dbReference>
<dbReference type="InParanoid" id="P73241"/>
<dbReference type="PhylomeDB" id="P73241"/>
<dbReference type="EvolutionaryTrace" id="P73241"/>
<dbReference type="Proteomes" id="UP000001425">
    <property type="component" value="Chromosome"/>
</dbReference>
<dbReference type="GO" id="GO:0016020">
    <property type="term" value="C:membrane"/>
    <property type="evidence" value="ECO:0000318"/>
    <property type="project" value="GO_Central"/>
</dbReference>
<dbReference type="GO" id="GO:0005886">
    <property type="term" value="C:plasma membrane"/>
    <property type="evidence" value="ECO:0007669"/>
    <property type="project" value="UniProtKB-SubCell"/>
</dbReference>
<dbReference type="GO" id="GO:0005524">
    <property type="term" value="F:ATP binding"/>
    <property type="evidence" value="ECO:0007669"/>
    <property type="project" value="UniProtKB-KW"/>
</dbReference>
<dbReference type="GO" id="GO:0016887">
    <property type="term" value="F:ATP hydrolysis activity"/>
    <property type="evidence" value="ECO:0007669"/>
    <property type="project" value="InterPro"/>
</dbReference>
<dbReference type="GO" id="GO:0005507">
    <property type="term" value="F:copper ion binding"/>
    <property type="evidence" value="ECO:0000314"/>
    <property type="project" value="UniProtKB"/>
</dbReference>
<dbReference type="GO" id="GO:0043682">
    <property type="term" value="F:P-type divalent copper transporter activity"/>
    <property type="evidence" value="ECO:0000318"/>
    <property type="project" value="GO_Central"/>
</dbReference>
<dbReference type="GO" id="GO:0140581">
    <property type="term" value="F:P-type monovalent copper transporter activity"/>
    <property type="evidence" value="ECO:0007669"/>
    <property type="project" value="UniProtKB-EC"/>
</dbReference>
<dbReference type="GO" id="GO:0055070">
    <property type="term" value="P:copper ion homeostasis"/>
    <property type="evidence" value="ECO:0000318"/>
    <property type="project" value="GO_Central"/>
</dbReference>
<dbReference type="GO" id="GO:0015677">
    <property type="term" value="P:copper ion import"/>
    <property type="evidence" value="ECO:0000304"/>
    <property type="project" value="UniProtKB"/>
</dbReference>
<dbReference type="CDD" id="cd00371">
    <property type="entry name" value="HMA"/>
    <property type="match status" value="1"/>
</dbReference>
<dbReference type="CDD" id="cd02094">
    <property type="entry name" value="P-type_ATPase_Cu-like"/>
    <property type="match status" value="1"/>
</dbReference>
<dbReference type="FunFam" id="3.30.70.100:FF:000005">
    <property type="entry name" value="Copper-exporting P-type ATPase A"/>
    <property type="match status" value="1"/>
</dbReference>
<dbReference type="FunFam" id="3.40.50.1000:FF:000144">
    <property type="entry name" value="copper-transporting ATPase 1 isoform X2"/>
    <property type="match status" value="1"/>
</dbReference>
<dbReference type="FunFam" id="2.70.150.10:FF:000002">
    <property type="entry name" value="Copper-transporting ATPase 1, putative"/>
    <property type="match status" value="1"/>
</dbReference>
<dbReference type="Gene3D" id="3.30.70.100">
    <property type="match status" value="1"/>
</dbReference>
<dbReference type="Gene3D" id="3.40.1110.10">
    <property type="entry name" value="Calcium-transporting ATPase, cytoplasmic domain N"/>
    <property type="match status" value="1"/>
</dbReference>
<dbReference type="Gene3D" id="2.70.150.10">
    <property type="entry name" value="Calcium-transporting ATPase, cytoplasmic transduction domain A"/>
    <property type="match status" value="1"/>
</dbReference>
<dbReference type="Gene3D" id="3.40.50.1000">
    <property type="entry name" value="HAD superfamily/HAD-like"/>
    <property type="match status" value="1"/>
</dbReference>
<dbReference type="InterPro" id="IPR023299">
    <property type="entry name" value="ATPase_P-typ_cyto_dom_N"/>
</dbReference>
<dbReference type="InterPro" id="IPR018303">
    <property type="entry name" value="ATPase_P-typ_P_site"/>
</dbReference>
<dbReference type="InterPro" id="IPR023298">
    <property type="entry name" value="ATPase_P-typ_TM_dom_sf"/>
</dbReference>
<dbReference type="InterPro" id="IPR008250">
    <property type="entry name" value="ATPase_P-typ_transduc_dom_A_sf"/>
</dbReference>
<dbReference type="InterPro" id="IPR036412">
    <property type="entry name" value="HAD-like_sf"/>
</dbReference>
<dbReference type="InterPro" id="IPR023214">
    <property type="entry name" value="HAD_sf"/>
</dbReference>
<dbReference type="InterPro" id="IPR017969">
    <property type="entry name" value="Heavy-metal-associated_CS"/>
</dbReference>
<dbReference type="InterPro" id="IPR006121">
    <property type="entry name" value="HMA_dom"/>
</dbReference>
<dbReference type="InterPro" id="IPR036163">
    <property type="entry name" value="HMA_dom_sf"/>
</dbReference>
<dbReference type="InterPro" id="IPR027256">
    <property type="entry name" value="P-typ_ATPase_IB"/>
</dbReference>
<dbReference type="InterPro" id="IPR001757">
    <property type="entry name" value="P_typ_ATPase"/>
</dbReference>
<dbReference type="InterPro" id="IPR044492">
    <property type="entry name" value="P_typ_ATPase_HD_dom"/>
</dbReference>
<dbReference type="NCBIfam" id="TIGR01511">
    <property type="entry name" value="ATPase-IB1_Cu"/>
    <property type="match status" value="1"/>
</dbReference>
<dbReference type="NCBIfam" id="TIGR01525">
    <property type="entry name" value="ATPase-IB_hvy"/>
    <property type="match status" value="1"/>
</dbReference>
<dbReference type="NCBIfam" id="TIGR01494">
    <property type="entry name" value="ATPase_P-type"/>
    <property type="match status" value="2"/>
</dbReference>
<dbReference type="PANTHER" id="PTHR43520">
    <property type="entry name" value="ATP7, ISOFORM B"/>
    <property type="match status" value="1"/>
</dbReference>
<dbReference type="PANTHER" id="PTHR43520:SF8">
    <property type="entry name" value="P-TYPE CU(+) TRANSPORTER"/>
    <property type="match status" value="1"/>
</dbReference>
<dbReference type="Pfam" id="PF00122">
    <property type="entry name" value="E1-E2_ATPase"/>
    <property type="match status" value="1"/>
</dbReference>
<dbReference type="Pfam" id="PF00403">
    <property type="entry name" value="HMA"/>
    <property type="match status" value="1"/>
</dbReference>
<dbReference type="Pfam" id="PF00702">
    <property type="entry name" value="Hydrolase"/>
    <property type="match status" value="1"/>
</dbReference>
<dbReference type="PRINTS" id="PR00119">
    <property type="entry name" value="CATATPASE"/>
</dbReference>
<dbReference type="PRINTS" id="PR00943">
    <property type="entry name" value="CUATPASE"/>
</dbReference>
<dbReference type="SFLD" id="SFLDS00003">
    <property type="entry name" value="Haloacid_Dehalogenase"/>
    <property type="match status" value="1"/>
</dbReference>
<dbReference type="SFLD" id="SFLDF00027">
    <property type="entry name" value="p-type_atpase"/>
    <property type="match status" value="1"/>
</dbReference>
<dbReference type="SUPFAM" id="SSF81653">
    <property type="entry name" value="Calcium ATPase, transduction domain A"/>
    <property type="match status" value="1"/>
</dbReference>
<dbReference type="SUPFAM" id="SSF81665">
    <property type="entry name" value="Calcium ATPase, transmembrane domain M"/>
    <property type="match status" value="1"/>
</dbReference>
<dbReference type="SUPFAM" id="SSF56784">
    <property type="entry name" value="HAD-like"/>
    <property type="match status" value="1"/>
</dbReference>
<dbReference type="SUPFAM" id="SSF55008">
    <property type="entry name" value="HMA, heavy metal-associated domain"/>
    <property type="match status" value="1"/>
</dbReference>
<dbReference type="PROSITE" id="PS00154">
    <property type="entry name" value="ATPASE_E1_E2"/>
    <property type="match status" value="1"/>
</dbReference>
<dbReference type="PROSITE" id="PS01047">
    <property type="entry name" value="HMA_1"/>
    <property type="match status" value="1"/>
</dbReference>
<dbReference type="PROSITE" id="PS50846">
    <property type="entry name" value="HMA_2"/>
    <property type="match status" value="1"/>
</dbReference>
<organism>
    <name type="scientific">Synechocystis sp. (strain ATCC 27184 / PCC 6803 / Kazusa)</name>
    <dbReference type="NCBI Taxonomy" id="1111708"/>
    <lineage>
        <taxon>Bacteria</taxon>
        <taxon>Bacillati</taxon>
        <taxon>Cyanobacteriota</taxon>
        <taxon>Cyanophyceae</taxon>
        <taxon>Synechococcales</taxon>
        <taxon>Merismopediaceae</taxon>
        <taxon>Synechocystis</taxon>
    </lineage>
</organism>
<proteinExistence type="evidence at protein level"/>
<sequence length="745" mass="79950">MAQTINLQLEGMRCAACASSIERAIAKVPGVQSCQVNFALEQAVVSYHGETTPQILTDAVERAGYHARVLKQQVLSSQQTEDRKPVFSAKLVTGLVISAVLFFGSLPMMLGVNIPHFPHIFHDPWLQWLLATPVQFWSGAEFYRGAWKSVRTRSATMDTLVALGTSAAYFYSVAITLFPQWLTSQGLAAHVYFEAAAVVITLILLGRSLEQRARRETSAAIRKLMGLQPQTALVKRGEHWETVAIAELAINDVVRVRPGEKIPVDGVVVAGNSTVDESLVTGESFPVDKTVGTEVIGATLNKSGSLDIQVSKLGQDSVLAQIIQLVQQAQASKAPIQHFVDRITHWFVPTVIVVAIAAFCIWWLTTGNITLAVLTLVEVLIIACPCALGLATPTSVMVGTGKGAEYGVLIKEASSLEMAEKLTAIVLDKTGTLTQGKPSVTNFFTLSPTSTEESLQLIQWAASVEQYSEHPLAEAVVNYGQSQQVSLLEIDNFQAIAGCGVAGQWQGQWIRLGTSNWLTDLGVTGTEHQPWQSQAQQWEKEQKTVIWLAVDTEVKALLAIADAIKPSSPQVVQALKKLGLSVYMLTGDNQATAQAIADTVGIRHVLAQVRPGDKAQQVEQLQQKGNIVAMVGDGINDAPALAQADVGIAIGTGTDVAIAASDITLIAGDLQGILTAIKLSRATMGNIRQNLFFAFIYNVIGIPVAAGLFYPLFGLLLNPILAGAAMAFSSVSVVTNALRLKKFCP</sequence>